<feature type="chain" id="PRO_0000089103" description="Actin-related protein 4">
    <location>
        <begin position="1"/>
        <end position="489"/>
    </location>
</feature>
<feature type="region of interest" description="Disordered" evidence="1">
    <location>
        <begin position="323"/>
        <end position="379"/>
    </location>
</feature>
<feature type="compositionally biased region" description="Basic and acidic residues" evidence="1">
    <location>
        <begin position="332"/>
        <end position="347"/>
    </location>
</feature>
<feature type="compositionally biased region" description="Polar residues" evidence="1">
    <location>
        <begin position="348"/>
        <end position="364"/>
    </location>
</feature>
<feature type="compositionally biased region" description="Basic and acidic residues" evidence="1">
    <location>
        <begin position="365"/>
        <end position="379"/>
    </location>
</feature>
<feature type="modified residue" description="Phosphoserine" evidence="15">
    <location>
        <position position="349"/>
    </location>
</feature>
<feature type="mutagenesis site" description="Lethal; when associated with D-161. Formamide-, hydroxyurea and UV-hypersensitivity, suppressor of TY phenotype; when associated with A-159." evidence="8">
    <original>S</original>
    <variation>A</variation>
    <location>
        <position position="23"/>
    </location>
</feature>
<feature type="mutagenesis site" description="No histone acetyltransferase activity at 37 degrees Celsius." evidence="2">
    <original>C</original>
    <variation>Y</variation>
    <location>
        <position position="155"/>
    </location>
</feature>
<feature type="mutagenesis site" description="Formamide-, hydroxyurea and UV-hypersensitivity, suppressor of TY phenotype; when associated with S-23." evidence="8">
    <original>D</original>
    <variation>A</variation>
    <location>
        <position position="159"/>
    </location>
</feature>
<feature type="mutagenesis site" description="Formamide-, hydroxyurea and UV-hypersensitivity, destabilization of ARP4, suppressor of TY phenotype and elevated levels of MSN2/MSN4-regulated genes. Lethal; when associated with A-23." evidence="8">
    <original>G</original>
    <variation>D</variation>
    <location>
        <position position="161"/>
    </location>
</feature>
<feature type="mutagenesis site" description="Defect in promoter association and change in chromatin structure." evidence="4">
    <original>G</original>
    <variation>R</variation>
    <location>
        <position position="187"/>
    </location>
</feature>
<feature type="mutagenesis site" description="No histone acetyltransferase activity at 37 degrees Celsius. Defect in promoter association and change in chromatin structure." evidence="2 4">
    <original>G</original>
    <variation>S</variation>
    <location>
        <position position="455"/>
    </location>
</feature>
<feature type="strand" evidence="17">
    <location>
        <begin position="9"/>
        <end position="11"/>
    </location>
</feature>
<feature type="strand" evidence="17">
    <location>
        <begin position="17"/>
        <end position="21"/>
    </location>
</feature>
<feature type="strand" evidence="17">
    <location>
        <begin position="23"/>
        <end position="30"/>
    </location>
</feature>
<feature type="strand" evidence="21">
    <location>
        <begin position="33"/>
        <end position="35"/>
    </location>
</feature>
<feature type="strand" evidence="17">
    <location>
        <begin position="37"/>
        <end position="47"/>
    </location>
</feature>
<feature type="strand" evidence="20">
    <location>
        <begin position="48"/>
        <end position="52"/>
    </location>
</feature>
<feature type="helix" evidence="17">
    <location>
        <begin position="59"/>
        <end position="62"/>
    </location>
</feature>
<feature type="strand" evidence="17">
    <location>
        <begin position="67"/>
        <end position="76"/>
    </location>
</feature>
<feature type="strand" evidence="17">
    <location>
        <begin position="79"/>
        <end position="81"/>
    </location>
</feature>
<feature type="helix" evidence="17">
    <location>
        <begin position="83"/>
        <end position="96"/>
    </location>
</feature>
<feature type="strand" evidence="17">
    <location>
        <begin position="107"/>
        <end position="112"/>
    </location>
</feature>
<feature type="helix" evidence="17">
    <location>
        <begin position="118"/>
        <end position="129"/>
    </location>
</feature>
<feature type="strand" evidence="17">
    <location>
        <begin position="135"/>
        <end position="141"/>
    </location>
</feature>
<feature type="helix" evidence="17">
    <location>
        <begin position="142"/>
        <end position="149"/>
    </location>
</feature>
<feature type="strand" evidence="17">
    <location>
        <begin position="153"/>
        <end position="160"/>
    </location>
</feature>
<feature type="strand" evidence="17">
    <location>
        <begin position="165"/>
        <end position="171"/>
    </location>
</feature>
<feature type="helix" evidence="18">
    <location>
        <begin position="177"/>
        <end position="179"/>
    </location>
</feature>
<feature type="strand" evidence="17">
    <location>
        <begin position="181"/>
        <end position="184"/>
    </location>
</feature>
<feature type="helix" evidence="17">
    <location>
        <begin position="187"/>
        <end position="197"/>
    </location>
</feature>
<feature type="turn" evidence="20">
    <location>
        <begin position="198"/>
        <end position="200"/>
    </location>
</feature>
<feature type="helix" evidence="18">
    <location>
        <begin position="206"/>
        <end position="208"/>
    </location>
</feature>
<feature type="strand" evidence="17">
    <location>
        <begin position="209"/>
        <end position="211"/>
    </location>
</feature>
<feature type="strand" evidence="17">
    <location>
        <begin position="213"/>
        <end position="215"/>
    </location>
</feature>
<feature type="helix" evidence="17">
    <location>
        <begin position="227"/>
        <end position="235"/>
    </location>
</feature>
<feature type="helix" evidence="17">
    <location>
        <begin position="238"/>
        <end position="245"/>
    </location>
</feature>
<feature type="strand" evidence="18">
    <location>
        <begin position="251"/>
        <end position="253"/>
    </location>
</feature>
<feature type="helix" evidence="17">
    <location>
        <begin position="254"/>
        <end position="256"/>
    </location>
</feature>
<feature type="helix" evidence="17">
    <location>
        <begin position="258"/>
        <end position="261"/>
    </location>
</feature>
<feature type="turn" evidence="18">
    <location>
        <begin position="262"/>
        <end position="264"/>
    </location>
</feature>
<feature type="strand" evidence="18">
    <location>
        <begin position="269"/>
        <end position="271"/>
    </location>
</feature>
<feature type="strand" evidence="16">
    <location>
        <begin position="273"/>
        <end position="275"/>
    </location>
</feature>
<feature type="strand" evidence="18">
    <location>
        <begin position="277"/>
        <end position="279"/>
    </location>
</feature>
<feature type="helix" evidence="17">
    <location>
        <begin position="282"/>
        <end position="290"/>
    </location>
</feature>
<feature type="turn" evidence="17">
    <location>
        <begin position="291"/>
        <end position="293"/>
    </location>
</feature>
<feature type="turn" evidence="17">
    <location>
        <begin position="297"/>
        <end position="299"/>
    </location>
</feature>
<feature type="strand" evidence="20">
    <location>
        <begin position="308"/>
        <end position="310"/>
    </location>
</feature>
<feature type="helix" evidence="17">
    <location>
        <begin position="385"/>
        <end position="395"/>
    </location>
</feature>
<feature type="helix" evidence="17">
    <location>
        <begin position="398"/>
        <end position="406"/>
    </location>
</feature>
<feature type="strand" evidence="17">
    <location>
        <begin position="408"/>
        <end position="412"/>
    </location>
</feature>
<feature type="helix" evidence="17">
    <location>
        <begin position="413"/>
        <end position="416"/>
    </location>
</feature>
<feature type="helix" evidence="17">
    <location>
        <begin position="420"/>
        <end position="431"/>
    </location>
</feature>
<feature type="strand" evidence="19">
    <location>
        <begin position="439"/>
        <end position="441"/>
    </location>
</feature>
<feature type="helix" evidence="17">
    <location>
        <begin position="446"/>
        <end position="448"/>
    </location>
</feature>
<feature type="helix" evidence="17">
    <location>
        <begin position="451"/>
        <end position="459"/>
    </location>
</feature>
<feature type="helix" evidence="17">
    <location>
        <begin position="463"/>
        <end position="468"/>
    </location>
</feature>
<feature type="strand" evidence="16">
    <location>
        <begin position="469"/>
        <end position="471"/>
    </location>
</feature>
<feature type="helix" evidence="17">
    <location>
        <begin position="472"/>
        <end position="478"/>
    </location>
</feature>
<feature type="turn" evidence="17">
    <location>
        <begin position="479"/>
        <end position="485"/>
    </location>
</feature>
<proteinExistence type="evidence at protein level"/>
<reference key="1">
    <citation type="journal article" date="1994" name="Proc. Natl. Acad. Sci. U.S.A.">
        <title>An essential gene of Saccharomyces cerevisiae coding for an actin-related protein.</title>
        <authorList>
            <person name="Harata M."/>
            <person name="Karwan A."/>
            <person name="Wintersberger U."/>
        </authorList>
    </citation>
    <scope>NUCLEOTIDE SEQUENCE [GENOMIC DNA]</scope>
</reference>
<reference key="2">
    <citation type="journal article" date="1994" name="Proc. Natl. Acad. Sci. U.S.A.">
        <authorList>
            <person name="Harata M."/>
            <person name="Karwan A."/>
            <person name="Wintersberger U."/>
        </authorList>
    </citation>
    <scope>ERRATUM OF PUBMED:8058791</scope>
</reference>
<reference key="3">
    <citation type="journal article" date="1995" name="Yeast">
        <title>Sequence analysis of a 33.1 kb fragment from the left arm of Saccharomyces cerevisiae chromosome X, including putative proteins with leucine zippers, a fungal Zn(II)2-Cys6 binuclear cluster domain and a putative alpha 2-SCB-alpha 2 binding site.</title>
        <authorList>
            <person name="Miosga T."/>
            <person name="Schaaff-Gerstenschlaeger I."/>
            <person name="Chalwatzis N."/>
            <person name="Baur A."/>
            <person name="Boles E."/>
            <person name="Fournier C."/>
            <person name="Schmitt S."/>
            <person name="Velten C."/>
            <person name="Wilhelm N."/>
            <person name="Zimmermann F.K."/>
        </authorList>
    </citation>
    <scope>NUCLEOTIDE SEQUENCE [GENOMIC DNA]</scope>
    <source>
        <strain>ATCC 204508 / S288c</strain>
    </source>
</reference>
<reference key="4">
    <citation type="journal article" date="1996" name="EMBO J.">
        <title>Complete nucleotide sequence of Saccharomyces cerevisiae chromosome X.</title>
        <authorList>
            <person name="Galibert F."/>
            <person name="Alexandraki D."/>
            <person name="Baur A."/>
            <person name="Boles E."/>
            <person name="Chalwatzis N."/>
            <person name="Chuat J.-C."/>
            <person name="Coster F."/>
            <person name="Cziepluch C."/>
            <person name="de Haan M."/>
            <person name="Domdey H."/>
            <person name="Durand P."/>
            <person name="Entian K.-D."/>
            <person name="Gatius M."/>
            <person name="Goffeau A."/>
            <person name="Grivell L.A."/>
            <person name="Hennemann A."/>
            <person name="Herbert C.J."/>
            <person name="Heumann K."/>
            <person name="Hilger F."/>
            <person name="Hollenberg C.P."/>
            <person name="Huang M.-E."/>
            <person name="Jacq C."/>
            <person name="Jauniaux J.-C."/>
            <person name="Katsoulou C."/>
            <person name="Kirchrath L."/>
            <person name="Kleine K."/>
            <person name="Kordes E."/>
            <person name="Koetter P."/>
            <person name="Liebl S."/>
            <person name="Louis E.J."/>
            <person name="Manus V."/>
            <person name="Mewes H.-W."/>
            <person name="Miosga T."/>
            <person name="Obermaier B."/>
            <person name="Perea J."/>
            <person name="Pohl T.M."/>
            <person name="Portetelle D."/>
            <person name="Pujol A."/>
            <person name="Purnelle B."/>
            <person name="Ramezani Rad M."/>
            <person name="Rasmussen S.W."/>
            <person name="Rose M."/>
            <person name="Rossau R."/>
            <person name="Schaaff-Gerstenschlaeger I."/>
            <person name="Smits P.H.M."/>
            <person name="Scarcez T."/>
            <person name="Soriano N."/>
            <person name="To Van D."/>
            <person name="Tzermia M."/>
            <person name="Van Broekhoven A."/>
            <person name="Vandenbol M."/>
            <person name="Wedler H."/>
            <person name="von Wettstein D."/>
            <person name="Wambutt R."/>
            <person name="Zagulski M."/>
            <person name="Zollner A."/>
            <person name="Karpfinger-Hartl L."/>
        </authorList>
    </citation>
    <scope>NUCLEOTIDE SEQUENCE [LARGE SCALE GENOMIC DNA]</scope>
    <source>
        <strain>ATCC 204508 / S288c</strain>
    </source>
</reference>
<reference key="5">
    <citation type="journal article" date="2014" name="G3 (Bethesda)">
        <title>The reference genome sequence of Saccharomyces cerevisiae: Then and now.</title>
        <authorList>
            <person name="Engel S.R."/>
            <person name="Dietrich F.S."/>
            <person name="Fisk D.G."/>
            <person name="Binkley G."/>
            <person name="Balakrishnan R."/>
            <person name="Costanzo M.C."/>
            <person name="Dwight S.S."/>
            <person name="Hitz B.C."/>
            <person name="Karra K."/>
            <person name="Nash R.S."/>
            <person name="Weng S."/>
            <person name="Wong E.D."/>
            <person name="Lloyd P."/>
            <person name="Skrzypek M.S."/>
            <person name="Miyasato S.R."/>
            <person name="Simison M."/>
            <person name="Cherry J.M."/>
        </authorList>
    </citation>
    <scope>GENOME REANNOTATION</scope>
    <source>
        <strain>ATCC 204508 / S288c</strain>
    </source>
</reference>
<reference key="6">
    <citation type="journal article" date="2000" name="Mol. Cell">
        <title>Multiple links between the NuA4 histone acetyltransferase complex and epigenetic control of transcription.</title>
        <authorList>
            <person name="Galarneau L."/>
            <person name="Nourani A."/>
            <person name="Boudreault A.A."/>
            <person name="Zhang Y."/>
            <person name="Heliot L."/>
            <person name="Allard S."/>
            <person name="Savard J."/>
            <person name="Lane W.S."/>
            <person name="Stillman D.J."/>
            <person name="Cote J."/>
        </authorList>
    </citation>
    <scope>PROTEIN SEQUENCE OF 55-66; 202-210; 220-243; 269-296; 317-323; 378-430 AND 448-482</scope>
    <scope>IDENTIFICATION IN THE NUA4 COMPLEX</scope>
    <scope>INTERACTION WITH HISTONES H2A; H3 AND H4</scope>
    <scope>MUTAGENESIS OF CYS-155 AND GLY-455</scope>
    <scope>FUNCTION</scope>
</reference>
<reference key="7">
    <citation type="journal article" date="1995" name="Mol. Biol. Cell">
        <title>The actin-related protein Act3p of Saccharomyces cerevisiae is located in the nucleus.</title>
        <authorList>
            <person name="Weber V."/>
            <person name="Harata M."/>
            <person name="Hauser H."/>
            <person name="Wintersberger U."/>
        </authorList>
    </citation>
    <scope>SUBCELLULAR LOCATION</scope>
</reference>
<reference key="8">
    <citation type="journal article" date="2000" name="Nature">
        <title>A chromatin remodelling complex involved in transcription and DNA processing.</title>
        <authorList>
            <person name="Shen X."/>
            <person name="Mizuguchi G."/>
            <person name="Hamiche A."/>
            <person name="Wu C."/>
        </authorList>
    </citation>
    <scope>IDENTIFICATION IN THE INO80 COMPLEX</scope>
    <scope>FUNCTION OF THE INO80 COMPLEX</scope>
    <scope>IDENTIFICATION BY MASS SPECTROMETRY</scope>
</reference>
<reference key="9">
    <citation type="journal article" date="2002" name="Nucleic Acids Res.">
        <title>Correlation between chromatin association and transcriptional regulation for the Act3p/Arp4 nuclear actin-related protein of Saccharomyces cerevisiae.</title>
        <authorList>
            <person name="Harata M."/>
            <person name="Zhang Y."/>
            <person name="Stillman D.J."/>
            <person name="Matsui D."/>
            <person name="Oma Y."/>
            <person name="Nishimori K."/>
            <person name="Mochizuki R."/>
        </authorList>
    </citation>
    <scope>FUNCTION</scope>
    <scope>MUTAGENESIS OF GLY-187 AND GLY-455</scope>
</reference>
<reference key="10">
    <citation type="journal article" date="1997" name="Yeast">
        <title>Who's who among the Saccharomyces cerevisiae actin-related proteins? A classification and nomenclature proposal for a large family.</title>
        <authorList>
            <person name="Poch O."/>
            <person name="Winsor B."/>
        </authorList>
    </citation>
    <scope>NOMENCLATURE</scope>
</reference>
<reference key="11">
    <citation type="journal article" date="2002" name="Nature">
        <title>Acetylation of histone H4 by Esa1 is required for DNA double-strand break repair.</title>
        <authorList>
            <person name="Bird A.W."/>
            <person name="Yu D.Y."/>
            <person name="Pray-Grant M.G."/>
            <person name="Qiu Q."/>
            <person name="Harmon K.E."/>
            <person name="Megee P.C."/>
            <person name="Grant P.A."/>
            <person name="Smith M.M."/>
            <person name="Christman M.F."/>
        </authorList>
    </citation>
    <scope>FUNCTION</scope>
</reference>
<reference key="12">
    <citation type="journal article" date="2003" name="Mol. Cell">
        <title>Involvement of actin-related proteins in ATP-dependent chromatin remodeling.</title>
        <authorList>
            <person name="Shen X."/>
            <person name="Ranallo R."/>
            <person name="Choi E."/>
            <person name="Wu C."/>
        </authorList>
    </citation>
    <scope>IDENTIFICATION IN THE INO80 COMPLEX</scope>
    <scope>IDENTIFICATION BY MASS SPECTROMETRY</scope>
</reference>
<reference key="13">
    <citation type="journal article" date="2003" name="Mol. Cell">
        <title>Assigning function to yeast proteins by integration of technologies.</title>
        <authorList>
            <person name="Hazbun T.R."/>
            <person name="Malmstroem L."/>
            <person name="Anderson S."/>
            <person name="Graczyk B.J."/>
            <person name="Fox B."/>
            <person name="Riffle M."/>
            <person name="Sundin B.A."/>
            <person name="Aranda J.D."/>
            <person name="McDonald W.H."/>
            <person name="Chiu C.-H."/>
            <person name="Snydsman B.E."/>
            <person name="Bradley P."/>
            <person name="Muller E.G.D."/>
            <person name="Fields S."/>
            <person name="Baker D."/>
            <person name="Yates J.R. III"/>
            <person name="Davis T.N."/>
        </authorList>
    </citation>
    <scope>IDENTIFICATION BY MASS SPECTROMETRY</scope>
</reference>
<reference key="14">
    <citation type="journal article" date="2003" name="Nature">
        <title>Global analysis of protein expression in yeast.</title>
        <authorList>
            <person name="Ghaemmaghami S."/>
            <person name="Huh W.-K."/>
            <person name="Bower K."/>
            <person name="Howson R.W."/>
            <person name="Belle A."/>
            <person name="Dephoure N."/>
            <person name="O'Shea E.K."/>
            <person name="Weissman J.S."/>
        </authorList>
    </citation>
    <scope>LEVEL OF PROTEIN EXPRESSION [LARGE SCALE ANALYSIS]</scope>
</reference>
<reference key="15">
    <citation type="journal article" date="2003" name="Mol. Cell">
        <title>A Snf2 family ATPase complex required for recruitment of the histone H2A variant Htz1.</title>
        <authorList>
            <person name="Krogan N.J."/>
            <person name="Keogh M.-C."/>
            <person name="Datta N."/>
            <person name="Sawa C."/>
            <person name="Ryan O.W."/>
            <person name="Ding H."/>
            <person name="Haw R.A."/>
            <person name="Pootoolal J."/>
            <person name="Tong A."/>
            <person name="Canadien V."/>
            <person name="Richards D.P."/>
            <person name="Wu X."/>
            <person name="Emili A."/>
            <person name="Hughes T.R."/>
            <person name="Buratowski S."/>
            <person name="Greenblatt J.F."/>
        </authorList>
    </citation>
    <scope>FUNCTION</scope>
    <scope>IDENTIFICATION IN THE SWR1 COMPLEX</scope>
    <scope>IDENTIFICATION BY MASS SPECTROMETRY</scope>
</reference>
<reference key="16">
    <citation type="journal article" date="2004" name="Mol. Cell">
        <title>Binding of chromatin-modifying activities to phosphorylated histone H2A at DNA damage sites.</title>
        <authorList>
            <person name="Downs J.A."/>
            <person name="Allard S."/>
            <person name="Jobin-Robitaille O."/>
            <person name="Javaheri A."/>
            <person name="Auger A."/>
            <person name="Bouchard N."/>
            <person name="Kron S.J."/>
            <person name="Jackson S.P."/>
            <person name="Cote J."/>
        </authorList>
    </citation>
    <scope>FUNCTION</scope>
</reference>
<reference key="17">
    <citation type="journal article" date="2003" name="Mol. Microbiol.">
        <title>The nuclear actin-related protein Act3p/Arp4p of Saccharomyces cerevisiae is involved in transcription regulation of stress genes.</title>
        <authorList>
            <person name="Goerzer I."/>
            <person name="Schueller C."/>
            <person name="Heidenreich E."/>
            <person name="Krupanska L."/>
            <person name="Kuchler K."/>
            <person name="Wintersberger U."/>
        </authorList>
    </citation>
    <scope>FUNCTION</scope>
    <scope>MUTAGENESIS OF SER-23; ASP-159 AND GLY-161</scope>
</reference>
<reference key="18">
    <citation type="journal article" date="2004" name="PLoS Biol.">
        <title>A protein complex containing the conserved Swi2/Snf2-related ATPase Swr1p deposits histone variant H2A.Z into euchromatin.</title>
        <authorList>
            <person name="Kobor M.S."/>
            <person name="Venkatasubrahmanyam S."/>
            <person name="Meneghini M.D."/>
            <person name="Gin J.W."/>
            <person name="Jennings J.L."/>
            <person name="Link A.J."/>
            <person name="Madhani H.D."/>
            <person name="Rine J."/>
        </authorList>
    </citation>
    <scope>FUNCTION</scope>
    <scope>IDENTIFICATION IN THE SWR1 COMPLEX</scope>
    <scope>IDENTIFICATION BY MASS SPECTROMETRY</scope>
</reference>
<reference key="19">
    <citation type="journal article" date="2004" name="Science">
        <title>ATP-driven exchange of histone H2AZ variant catalyzed by SWR1 chromatin remodeling complex.</title>
        <authorList>
            <person name="Mizuguchi G."/>
            <person name="Shen X."/>
            <person name="Landry J."/>
            <person name="Wu W.-H."/>
            <person name="Sen S."/>
            <person name="Wu C."/>
        </authorList>
    </citation>
    <scope>IDENTIFICATION IN THE SWR1 COMPLEX</scope>
    <scope>FUNCTION OF THE SWR1 COMPLEX</scope>
    <scope>IDENTIFICATION BY MASS SPECTROMETRY</scope>
</reference>
<reference key="20">
    <citation type="journal article" date="2007" name="J. Proteome Res.">
        <title>Large-scale phosphorylation analysis of alpha-factor-arrested Saccharomyces cerevisiae.</title>
        <authorList>
            <person name="Li X."/>
            <person name="Gerber S.A."/>
            <person name="Rudner A.D."/>
            <person name="Beausoleil S.A."/>
            <person name="Haas W."/>
            <person name="Villen J."/>
            <person name="Elias J.E."/>
            <person name="Gygi S.P."/>
        </authorList>
    </citation>
    <scope>IDENTIFICATION BY MASS SPECTROMETRY [LARGE SCALE ANALYSIS]</scope>
    <source>
        <strain>ADR376</strain>
    </source>
</reference>
<reference key="21">
    <citation type="journal article" date="2008" name="Mol. Cell. Proteomics">
        <title>A multidimensional chromatography technology for in-depth phosphoproteome analysis.</title>
        <authorList>
            <person name="Albuquerque C.P."/>
            <person name="Smolka M.B."/>
            <person name="Payne S.H."/>
            <person name="Bafna V."/>
            <person name="Eng J."/>
            <person name="Zhou H."/>
        </authorList>
    </citation>
    <scope>PHOSPHORYLATION [LARGE SCALE ANALYSIS] AT SER-349</scope>
    <scope>IDENTIFICATION BY MASS SPECTROMETRY [LARGE SCALE ANALYSIS]</scope>
</reference>
<reference key="22">
    <citation type="journal article" date="2009" name="Science">
        <title>Global analysis of Cdk1 substrate phosphorylation sites provides insights into evolution.</title>
        <authorList>
            <person name="Holt L.J."/>
            <person name="Tuch B.B."/>
            <person name="Villen J."/>
            <person name="Johnson A.D."/>
            <person name="Gygi S.P."/>
            <person name="Morgan D.O."/>
        </authorList>
    </citation>
    <scope>IDENTIFICATION BY MASS SPECTROMETRY [LARGE SCALE ANALYSIS]</scope>
</reference>
<keyword id="KW-0002">3D-structure</keyword>
<keyword id="KW-0010">Activator</keyword>
<keyword id="KW-0156">Chromatin regulator</keyword>
<keyword id="KW-0903">Direct protein sequencing</keyword>
<keyword id="KW-0227">DNA damage</keyword>
<keyword id="KW-0234">DNA repair</keyword>
<keyword id="KW-0539">Nucleus</keyword>
<keyword id="KW-0597">Phosphoprotein</keyword>
<keyword id="KW-1185">Reference proteome</keyword>
<keyword id="KW-0677">Repeat</keyword>
<keyword id="KW-0804">Transcription</keyword>
<keyword id="KW-0805">Transcription regulation</keyword>
<gene>
    <name type="primary">ARP4</name>
    <name type="synonym">ACT3</name>
    <name type="ordered locus">YJL081C</name>
    <name type="ORF">J1012</name>
</gene>
<comment type="function">
    <text evidence="2 3 4 5 8 9 10 11 12">Chromatin interaction component of the NuA4 histone acetyltransferase complex which is involved in transcriptional activation of selected genes principally by acetylation of nucleosomal histone H4 and H2A. The NuA4 complex is also involved in DNA repair. ARP4 recognizes H2AS128ph (gamma-H2A) and is required for NuA4 complex integrity. Component of the SWR1 complex which mediates the ATP-dependent exchange of histone H2A for the H2A variant HZT1 leading to transcriptional regulation of selected genes by chromatin remodeling. Component of the INO80 complex which remodels chromatin by shifting nucleosomes. Its ability to induce transcription of some phosphate-responsive genes is modulated by inositol polyphosphates. The INO80 complex is involved in DNA repair by associating to gamma-H2A as a response to DNA damage.</text>
</comment>
<comment type="subunit">
    <text evidence="2 3 6 9 10 11">Component of the NuA4 histone acetyltransferase complex composed of at least ACT1, ARP4, EAF3, EAF5, EAF6, EAF7, EPL1, ESA1, SWC4, TRA1, VID21, YAF9 and YNG2. Component of the chromatin-remodeling INO80 complex, at least composed of ARP4, ARP5, ARP8, RVB1, RVB2, TAF14, NHP10, IES1, IES3, IES4, IES6, ACT1, IES2, IES5 and INO80. Component of the SWR1 chromatin remodeling complex composed of at least ACT1, ARP4, RVB1, RVB2, ARP6, YAF9, VPS71, VPS72, SWC3, SWC4, SWC5, SWC7 and SWR1, and perhaps BDF1. Interacts with histones H4 (HHF1 and HHF2), H3 (HHT1 and HHT2) and H2A (HTA1 and HTA2).</text>
</comment>
<comment type="interaction">
    <interactant intactId="EBI-2939">
        <id>P80428</id>
    </interactant>
    <interactant intactId="EBI-6648">
        <id>Q08649</id>
        <label>ESA1</label>
    </interactant>
    <organismsDiffer>false</organismsDiffer>
    <experiments>10</experiments>
</comment>
<comment type="subcellular location">
    <subcellularLocation>
        <location evidence="13">Nucleus</location>
    </subcellularLocation>
</comment>
<comment type="miscellaneous">
    <text evidence="7">Present with 1070 molecules/cell in log phase SD medium.</text>
</comment>
<comment type="similarity">
    <text evidence="14">Belongs to the actin family. ARP4 subfamily.</text>
</comment>
<name>ARP4_YEAST</name>
<organism>
    <name type="scientific">Saccharomyces cerevisiae (strain ATCC 204508 / S288c)</name>
    <name type="common">Baker's yeast</name>
    <dbReference type="NCBI Taxonomy" id="559292"/>
    <lineage>
        <taxon>Eukaryota</taxon>
        <taxon>Fungi</taxon>
        <taxon>Dikarya</taxon>
        <taxon>Ascomycota</taxon>
        <taxon>Saccharomycotina</taxon>
        <taxon>Saccharomycetes</taxon>
        <taxon>Saccharomycetales</taxon>
        <taxon>Saccharomycetaceae</taxon>
        <taxon>Saccharomyces</taxon>
    </lineage>
</organism>
<protein>
    <recommendedName>
        <fullName>Actin-related protein 4</fullName>
    </recommendedName>
    <alternativeName>
        <fullName>Actin-like protein ARP4</fullName>
        <shortName>Actin-like protein 4</shortName>
    </alternativeName>
</protein>
<dbReference type="EMBL" id="X75317">
    <property type="protein sequence ID" value="CAA53066.1"/>
    <property type="molecule type" value="Genomic_DNA"/>
</dbReference>
<dbReference type="EMBL" id="X83502">
    <property type="protein sequence ID" value="CAA58489.1"/>
    <property type="molecule type" value="Genomic_DNA"/>
</dbReference>
<dbReference type="EMBL" id="Z49356">
    <property type="protein sequence ID" value="CAA89374.1"/>
    <property type="molecule type" value="Genomic_DNA"/>
</dbReference>
<dbReference type="EMBL" id="BK006943">
    <property type="protein sequence ID" value="DAA08718.1"/>
    <property type="molecule type" value="Genomic_DNA"/>
</dbReference>
<dbReference type="PIR" id="S47608">
    <property type="entry name" value="S47608"/>
</dbReference>
<dbReference type="RefSeq" id="NP_012454.1">
    <property type="nucleotide sequence ID" value="NM_001181514.1"/>
</dbReference>
<dbReference type="PDB" id="3QB0">
    <property type="method" value="X-ray"/>
    <property type="resolution" value="3.40 A"/>
    <property type="chains" value="A/B/C/D=1-489"/>
</dbReference>
<dbReference type="PDB" id="5I9E">
    <property type="method" value="X-ray"/>
    <property type="resolution" value="2.80 A"/>
    <property type="chains" value="A/C=1-489"/>
</dbReference>
<dbReference type="PDB" id="5NBL">
    <property type="method" value="X-ray"/>
    <property type="resolution" value="2.80 A"/>
    <property type="chains" value="A/B=1-489"/>
</dbReference>
<dbReference type="PDB" id="5NBM">
    <property type="method" value="X-ray"/>
    <property type="resolution" value="3.40 A"/>
    <property type="chains" value="A/B=1-489"/>
</dbReference>
<dbReference type="PDB" id="5NBN">
    <property type="method" value="X-ray"/>
    <property type="resolution" value="4.00 A"/>
    <property type="chains" value="A/B=1-489"/>
</dbReference>
<dbReference type="PDB" id="5Y81">
    <property type="method" value="EM"/>
    <property type="resolution" value="4.70 A"/>
    <property type="chains" value="F=1-489"/>
</dbReference>
<dbReference type="PDB" id="7VVY">
    <property type="method" value="EM"/>
    <property type="resolution" value="3.10 A"/>
    <property type="chains" value="F=1-489"/>
</dbReference>
<dbReference type="PDB" id="7VVZ">
    <property type="method" value="EM"/>
    <property type="resolution" value="8.80 A"/>
    <property type="chains" value="F=1-489"/>
</dbReference>
<dbReference type="PDB" id="7YFN">
    <property type="method" value="EM"/>
    <property type="resolution" value="3.80 A"/>
    <property type="chains" value="B=1-489"/>
</dbReference>
<dbReference type="PDB" id="7YFP">
    <property type="method" value="EM"/>
    <property type="resolution" value="4.00 A"/>
    <property type="chains" value="B=8-488"/>
</dbReference>
<dbReference type="PDB" id="8A5A">
    <property type="method" value="EM"/>
    <property type="resolution" value="3.30 A"/>
    <property type="chains" value="W=1-489"/>
</dbReference>
<dbReference type="PDB" id="8A5O">
    <property type="method" value="EM"/>
    <property type="resolution" value="3.20 A"/>
    <property type="chains" value="W=1-489"/>
</dbReference>
<dbReference type="PDB" id="8ESC">
    <property type="method" value="EM"/>
    <property type="resolution" value="3.10 A"/>
    <property type="chains" value="R=1-489"/>
</dbReference>
<dbReference type="PDBsum" id="3QB0"/>
<dbReference type="PDBsum" id="5I9E"/>
<dbReference type="PDBsum" id="5NBL"/>
<dbReference type="PDBsum" id="5NBM"/>
<dbReference type="PDBsum" id="5NBN"/>
<dbReference type="PDBsum" id="5Y81"/>
<dbReference type="PDBsum" id="7VVY"/>
<dbReference type="PDBsum" id="7VVZ"/>
<dbReference type="PDBsum" id="7YFN"/>
<dbReference type="PDBsum" id="7YFP"/>
<dbReference type="PDBsum" id="8A5A"/>
<dbReference type="PDBsum" id="8A5O"/>
<dbReference type="PDBsum" id="8ESC"/>
<dbReference type="EMDB" id="EMD-15163"/>
<dbReference type="EMDB" id="EMD-15177"/>
<dbReference type="EMDB" id="EMD-15179"/>
<dbReference type="EMDB" id="EMD-15186"/>
<dbReference type="EMDB" id="EMD-28575"/>
<dbReference type="EMDB" id="EMD-32149"/>
<dbReference type="EMDB" id="EMD-32150"/>
<dbReference type="EMDB" id="EMD-6816"/>
<dbReference type="SMR" id="P80428"/>
<dbReference type="BioGRID" id="33675">
    <property type="interactions" value="696"/>
</dbReference>
<dbReference type="ComplexPortal" id="CPX-2122">
    <property type="entry name" value="Swr1 chromatin remodelling complex"/>
</dbReference>
<dbReference type="ComplexPortal" id="CPX-3155">
    <property type="entry name" value="NuA4 histone acetyltransferase complex"/>
</dbReference>
<dbReference type="ComplexPortal" id="CPX-863">
    <property type="entry name" value="INO80 chromatin remodeling complex"/>
</dbReference>
<dbReference type="DIP" id="DIP-2361N"/>
<dbReference type="FunCoup" id="P80428">
    <property type="interactions" value="462"/>
</dbReference>
<dbReference type="IntAct" id="P80428">
    <property type="interactions" value="65"/>
</dbReference>
<dbReference type="MINT" id="P80428"/>
<dbReference type="STRING" id="4932.YJL081C"/>
<dbReference type="iPTMnet" id="P80428"/>
<dbReference type="PaxDb" id="4932-YJL081C"/>
<dbReference type="PeptideAtlas" id="P80428"/>
<dbReference type="EnsemblFungi" id="YJL081C_mRNA">
    <property type="protein sequence ID" value="YJL081C"/>
    <property type="gene ID" value="YJL081C"/>
</dbReference>
<dbReference type="GeneID" id="853364"/>
<dbReference type="KEGG" id="sce:YJL081C"/>
<dbReference type="AGR" id="SGD:S000003617"/>
<dbReference type="SGD" id="S000003617">
    <property type="gene designation" value="ARP4"/>
</dbReference>
<dbReference type="VEuPathDB" id="FungiDB:YJL081C"/>
<dbReference type="eggNOG" id="KOG0679">
    <property type="taxonomic scope" value="Eukaryota"/>
</dbReference>
<dbReference type="GeneTree" id="ENSGT00940000172256"/>
<dbReference type="HOGENOM" id="CLU_027965_6_2_1"/>
<dbReference type="InParanoid" id="P80428"/>
<dbReference type="OMA" id="MWLSRQE"/>
<dbReference type="OrthoDB" id="5132116at2759"/>
<dbReference type="BioCyc" id="YEAST:G3O-31538-MONOMER"/>
<dbReference type="BioGRID-ORCS" id="853364">
    <property type="hits" value="0 hits in 10 CRISPR screens"/>
</dbReference>
<dbReference type="EvolutionaryTrace" id="P80428"/>
<dbReference type="PRO" id="PR:P80428"/>
<dbReference type="Proteomes" id="UP000002311">
    <property type="component" value="Chromosome X"/>
</dbReference>
<dbReference type="RNAct" id="P80428">
    <property type="molecule type" value="protein"/>
</dbReference>
<dbReference type="GO" id="GO:0000785">
    <property type="term" value="C:chromatin"/>
    <property type="evidence" value="ECO:0000314"/>
    <property type="project" value="SGD"/>
</dbReference>
<dbReference type="GO" id="GO:0031011">
    <property type="term" value="C:Ino80 complex"/>
    <property type="evidence" value="ECO:0000353"/>
    <property type="project" value="SGD"/>
</dbReference>
<dbReference type="GO" id="GO:0035267">
    <property type="term" value="C:NuA4 histone acetyltransferase complex"/>
    <property type="evidence" value="ECO:0000314"/>
    <property type="project" value="SGD"/>
</dbReference>
<dbReference type="GO" id="GO:0005634">
    <property type="term" value="C:nucleus"/>
    <property type="evidence" value="ECO:0000314"/>
    <property type="project" value="SGD"/>
</dbReference>
<dbReference type="GO" id="GO:0016514">
    <property type="term" value="C:SWI/SNF complex"/>
    <property type="evidence" value="ECO:0000318"/>
    <property type="project" value="GO_Central"/>
</dbReference>
<dbReference type="GO" id="GO:0000812">
    <property type="term" value="C:Swr1 complex"/>
    <property type="evidence" value="ECO:0000314"/>
    <property type="project" value="SGD"/>
</dbReference>
<dbReference type="GO" id="GO:0005524">
    <property type="term" value="F:ATP binding"/>
    <property type="evidence" value="ECO:0000314"/>
    <property type="project" value="SGD"/>
</dbReference>
<dbReference type="GO" id="GO:0003682">
    <property type="term" value="F:chromatin binding"/>
    <property type="evidence" value="ECO:0000314"/>
    <property type="project" value="SGD"/>
</dbReference>
<dbReference type="GO" id="GO:0042393">
    <property type="term" value="F:histone binding"/>
    <property type="evidence" value="ECO:0000314"/>
    <property type="project" value="SGD"/>
</dbReference>
<dbReference type="GO" id="GO:0006325">
    <property type="term" value="P:chromatin organization"/>
    <property type="evidence" value="ECO:0000315"/>
    <property type="project" value="SGD"/>
</dbReference>
<dbReference type="GO" id="GO:0006338">
    <property type="term" value="P:chromatin remodeling"/>
    <property type="evidence" value="ECO:0000314"/>
    <property type="project" value="SGD"/>
</dbReference>
<dbReference type="GO" id="GO:0006281">
    <property type="term" value="P:DNA repair"/>
    <property type="evidence" value="ECO:0000314"/>
    <property type="project" value="SGD"/>
</dbReference>
<dbReference type="GO" id="GO:0006351">
    <property type="term" value="P:DNA-templated transcription"/>
    <property type="evidence" value="ECO:0000303"/>
    <property type="project" value="ComplexPortal"/>
</dbReference>
<dbReference type="GO" id="GO:0051382">
    <property type="term" value="P:kinetochore assembly"/>
    <property type="evidence" value="ECO:0000315"/>
    <property type="project" value="SGD"/>
</dbReference>
<dbReference type="GO" id="GO:0006355">
    <property type="term" value="P:regulation of DNA-templated transcription"/>
    <property type="evidence" value="ECO:0000315"/>
    <property type="project" value="SGD"/>
</dbReference>
<dbReference type="GO" id="GO:0006357">
    <property type="term" value="P:regulation of transcription by RNA polymerase II"/>
    <property type="evidence" value="ECO:0000314"/>
    <property type="project" value="SGD"/>
</dbReference>
<dbReference type="CDD" id="cd13395">
    <property type="entry name" value="ASKHA_NBD_Arp4_ACTL6-like"/>
    <property type="match status" value="1"/>
</dbReference>
<dbReference type="DisProt" id="DP00872"/>
<dbReference type="FunFam" id="3.30.420.40:FF:000278">
    <property type="entry name" value="Actin-related protein 4"/>
    <property type="match status" value="1"/>
</dbReference>
<dbReference type="FunFam" id="3.30.420.40:FF:000289">
    <property type="entry name" value="Actin-related protein 4"/>
    <property type="match status" value="1"/>
</dbReference>
<dbReference type="FunFam" id="3.90.640.10:FF:000061">
    <property type="entry name" value="Actin-related protein 4"/>
    <property type="match status" value="1"/>
</dbReference>
<dbReference type="Gene3D" id="3.30.420.40">
    <property type="match status" value="3"/>
</dbReference>
<dbReference type="Gene3D" id="3.90.640.10">
    <property type="entry name" value="Actin, Chain A, domain 4"/>
    <property type="match status" value="1"/>
</dbReference>
<dbReference type="InterPro" id="IPR004000">
    <property type="entry name" value="Actin"/>
</dbReference>
<dbReference type="InterPro" id="IPR020902">
    <property type="entry name" value="Actin/actin-like_CS"/>
</dbReference>
<dbReference type="InterPro" id="IPR043129">
    <property type="entry name" value="ATPase_NBD"/>
</dbReference>
<dbReference type="PANTHER" id="PTHR11937">
    <property type="entry name" value="ACTIN"/>
    <property type="match status" value="1"/>
</dbReference>
<dbReference type="Pfam" id="PF00022">
    <property type="entry name" value="Actin"/>
    <property type="match status" value="1"/>
</dbReference>
<dbReference type="SMART" id="SM00268">
    <property type="entry name" value="ACTIN"/>
    <property type="match status" value="1"/>
</dbReference>
<dbReference type="SUPFAM" id="SSF53067">
    <property type="entry name" value="Actin-like ATPase domain"/>
    <property type="match status" value="2"/>
</dbReference>
<dbReference type="PROSITE" id="PS01132">
    <property type="entry name" value="ACTINS_ACT_LIKE"/>
    <property type="match status" value="1"/>
</dbReference>
<evidence type="ECO:0000256" key="1">
    <source>
        <dbReference type="SAM" id="MobiDB-lite"/>
    </source>
</evidence>
<evidence type="ECO:0000269" key="2">
    <source>
    </source>
</evidence>
<evidence type="ECO:0000269" key="3">
    <source>
    </source>
</evidence>
<evidence type="ECO:0000269" key="4">
    <source>
    </source>
</evidence>
<evidence type="ECO:0000269" key="5">
    <source>
    </source>
</evidence>
<evidence type="ECO:0000269" key="6">
    <source>
    </source>
</evidence>
<evidence type="ECO:0000269" key="7">
    <source>
    </source>
</evidence>
<evidence type="ECO:0000269" key="8">
    <source>
    </source>
</evidence>
<evidence type="ECO:0000269" key="9">
    <source>
    </source>
</evidence>
<evidence type="ECO:0000269" key="10">
    <source>
    </source>
</evidence>
<evidence type="ECO:0000269" key="11">
    <source>
    </source>
</evidence>
<evidence type="ECO:0000269" key="12">
    <source>
    </source>
</evidence>
<evidence type="ECO:0000269" key="13">
    <source>
    </source>
</evidence>
<evidence type="ECO:0000305" key="14"/>
<evidence type="ECO:0007744" key="15">
    <source>
    </source>
</evidence>
<evidence type="ECO:0007829" key="16">
    <source>
        <dbReference type="PDB" id="3QB0"/>
    </source>
</evidence>
<evidence type="ECO:0007829" key="17">
    <source>
        <dbReference type="PDB" id="5I9E"/>
    </source>
</evidence>
<evidence type="ECO:0007829" key="18">
    <source>
        <dbReference type="PDB" id="5NBL"/>
    </source>
</evidence>
<evidence type="ECO:0007829" key="19">
    <source>
        <dbReference type="PDB" id="5NBM"/>
    </source>
</evidence>
<evidence type="ECO:0007829" key="20">
    <source>
        <dbReference type="PDB" id="7VVY"/>
    </source>
</evidence>
<evidence type="ECO:0007829" key="21">
    <source>
        <dbReference type="PDB" id="8A5A"/>
    </source>
</evidence>
<accession>P80428</accession>
<accession>D6VWA2</accession>
<sequence>MSNAALQVYGGDEVSAVVIDPGSYTTNIGYSGSDFPQSILPSVYGKYTADEGNKKIFSEQSIGIPRKDYELKPIIENGLVIDWDTAQEQWQWALQNELYLNSNSGIPALLTEPVWNSTENRKKSLEVLLEGMQFEACYLAPTSTCVSFAAGRPNCLVVDIGHDTCSVSPIVDGMTLSKSTRRNFIAGKFINHLIKKALEPKEIIPLFAIKQRKPEFIKKTFDYEVDKSLYDYANNRGFFQECKETLCHICPTKTLEETKTELSSTAKRSIESPWNEEIVFDNETRYGFAEELFLPKEDDIPANWPRSNSGVVKTWRNDYVPLKRTKPSGVNKSDKKVTPTEEKEQEAVSKSTSPAANSADTPNETGKRPLEEEKPPKENNELIGLADLVYSSIMSSDVDLRATLAHNVVLTGGTSSIPGLSDRLMTELNKILPSLKFRILTTGHTIERQYQSWLGGSILTSLGTFHQLWVGKKEYEEVGVERLLNDRFR</sequence>